<organism>
    <name type="scientific">Borreliella burgdorferi (strain ATCC 35210 / DSM 4680 / CIP 102532 / B31)</name>
    <name type="common">Borrelia burgdorferi</name>
    <dbReference type="NCBI Taxonomy" id="224326"/>
    <lineage>
        <taxon>Bacteria</taxon>
        <taxon>Pseudomonadati</taxon>
        <taxon>Spirochaetota</taxon>
        <taxon>Spirochaetia</taxon>
        <taxon>Spirochaetales</taxon>
        <taxon>Borreliaceae</taxon>
        <taxon>Borreliella</taxon>
    </lineage>
</organism>
<accession>O51737</accession>
<protein>
    <recommendedName>
        <fullName>DNA mismatch repair protein MutS</fullName>
    </recommendedName>
</protein>
<reference key="1">
    <citation type="journal article" date="1997" name="Nature">
        <title>Genomic sequence of a Lyme disease spirochaete, Borrelia burgdorferi.</title>
        <authorList>
            <person name="Fraser C.M."/>
            <person name="Casjens S."/>
            <person name="Huang W.M."/>
            <person name="Sutton G.G."/>
            <person name="Clayton R.A."/>
            <person name="Lathigra R."/>
            <person name="White O."/>
            <person name="Ketchum K.A."/>
            <person name="Dodson R.J."/>
            <person name="Hickey E.K."/>
            <person name="Gwinn M.L."/>
            <person name="Dougherty B.A."/>
            <person name="Tomb J.-F."/>
            <person name="Fleischmann R.D."/>
            <person name="Richardson D.L."/>
            <person name="Peterson J.D."/>
            <person name="Kerlavage A.R."/>
            <person name="Quackenbush J."/>
            <person name="Salzberg S.L."/>
            <person name="Hanson M."/>
            <person name="van Vugt R."/>
            <person name="Palmer N."/>
            <person name="Adams M.D."/>
            <person name="Gocayne J.D."/>
            <person name="Weidman J.F."/>
            <person name="Utterback T.R."/>
            <person name="Watthey L."/>
            <person name="McDonald L.A."/>
            <person name="Artiach P."/>
            <person name="Bowman C."/>
            <person name="Garland S.A."/>
            <person name="Fujii C."/>
            <person name="Cotton M.D."/>
            <person name="Horst K."/>
            <person name="Roberts K.M."/>
            <person name="Hatch B."/>
            <person name="Smith H.O."/>
            <person name="Venter J.C."/>
        </authorList>
    </citation>
    <scope>NUCLEOTIDE SEQUENCE [LARGE SCALE GENOMIC DNA]</scope>
    <source>
        <strain>ATCC 35210 / DSM 4680 / CIP 102532 / B31</strain>
    </source>
</reference>
<proteinExistence type="inferred from homology"/>
<dbReference type="EMBL" id="AE000783">
    <property type="protein sequence ID" value="AAC67157.1"/>
    <property type="molecule type" value="Genomic_DNA"/>
</dbReference>
<dbReference type="PIR" id="D70199">
    <property type="entry name" value="D70199"/>
</dbReference>
<dbReference type="RefSeq" id="NP_212931.1">
    <property type="nucleotide sequence ID" value="NC_001318.1"/>
</dbReference>
<dbReference type="RefSeq" id="WP_002657221.1">
    <property type="nucleotide sequence ID" value="NC_001318.1"/>
</dbReference>
<dbReference type="SMR" id="O51737"/>
<dbReference type="STRING" id="224326.BB_0797"/>
<dbReference type="PaxDb" id="224326-BB_0797"/>
<dbReference type="EnsemblBacteria" id="AAC67157">
    <property type="protein sequence ID" value="AAC67157"/>
    <property type="gene ID" value="BB_0797"/>
</dbReference>
<dbReference type="GeneID" id="56567376"/>
<dbReference type="KEGG" id="bbu:BB_0797"/>
<dbReference type="PATRIC" id="fig|224326.49.peg.1189"/>
<dbReference type="HOGENOM" id="CLU_002472_3_1_12"/>
<dbReference type="OrthoDB" id="9802448at2"/>
<dbReference type="Proteomes" id="UP000001807">
    <property type="component" value="Chromosome"/>
</dbReference>
<dbReference type="GO" id="GO:0005524">
    <property type="term" value="F:ATP binding"/>
    <property type="evidence" value="ECO:0007669"/>
    <property type="project" value="UniProtKB-UniRule"/>
</dbReference>
<dbReference type="GO" id="GO:0140664">
    <property type="term" value="F:ATP-dependent DNA damage sensor activity"/>
    <property type="evidence" value="ECO:0007669"/>
    <property type="project" value="InterPro"/>
</dbReference>
<dbReference type="GO" id="GO:0003684">
    <property type="term" value="F:damaged DNA binding"/>
    <property type="evidence" value="ECO:0007669"/>
    <property type="project" value="UniProtKB-UniRule"/>
</dbReference>
<dbReference type="GO" id="GO:0030983">
    <property type="term" value="F:mismatched DNA binding"/>
    <property type="evidence" value="ECO:0007669"/>
    <property type="project" value="InterPro"/>
</dbReference>
<dbReference type="GO" id="GO:0006298">
    <property type="term" value="P:mismatch repair"/>
    <property type="evidence" value="ECO:0007669"/>
    <property type="project" value="UniProtKB-UniRule"/>
</dbReference>
<dbReference type="CDD" id="cd03284">
    <property type="entry name" value="ABC_MutS1"/>
    <property type="match status" value="1"/>
</dbReference>
<dbReference type="Gene3D" id="1.10.1420.10">
    <property type="match status" value="2"/>
</dbReference>
<dbReference type="Gene3D" id="3.40.1170.10">
    <property type="entry name" value="DNA repair protein MutS, domain I"/>
    <property type="match status" value="1"/>
</dbReference>
<dbReference type="Gene3D" id="3.30.420.110">
    <property type="entry name" value="MutS, connector domain"/>
    <property type="match status" value="1"/>
</dbReference>
<dbReference type="Gene3D" id="3.40.50.300">
    <property type="entry name" value="P-loop containing nucleotide triphosphate hydrolases"/>
    <property type="match status" value="1"/>
</dbReference>
<dbReference type="HAMAP" id="MF_00096">
    <property type="entry name" value="MutS"/>
    <property type="match status" value="1"/>
</dbReference>
<dbReference type="InterPro" id="IPR005748">
    <property type="entry name" value="DNA_mismatch_repair_MutS"/>
</dbReference>
<dbReference type="InterPro" id="IPR007695">
    <property type="entry name" value="DNA_mismatch_repair_MutS-lik_N"/>
</dbReference>
<dbReference type="InterPro" id="IPR017261">
    <property type="entry name" value="DNA_mismatch_repair_MutS/MSH"/>
</dbReference>
<dbReference type="InterPro" id="IPR000432">
    <property type="entry name" value="DNA_mismatch_repair_MutS_C"/>
</dbReference>
<dbReference type="InterPro" id="IPR007861">
    <property type="entry name" value="DNA_mismatch_repair_MutS_clamp"/>
</dbReference>
<dbReference type="InterPro" id="IPR007696">
    <property type="entry name" value="DNA_mismatch_repair_MutS_core"/>
</dbReference>
<dbReference type="InterPro" id="IPR016151">
    <property type="entry name" value="DNA_mismatch_repair_MutS_N"/>
</dbReference>
<dbReference type="InterPro" id="IPR036187">
    <property type="entry name" value="DNA_mismatch_repair_MutS_sf"/>
</dbReference>
<dbReference type="InterPro" id="IPR007860">
    <property type="entry name" value="DNA_mmatch_repair_MutS_con_dom"/>
</dbReference>
<dbReference type="InterPro" id="IPR045076">
    <property type="entry name" value="MutS"/>
</dbReference>
<dbReference type="InterPro" id="IPR036678">
    <property type="entry name" value="MutS_con_dom_sf"/>
</dbReference>
<dbReference type="InterPro" id="IPR027417">
    <property type="entry name" value="P-loop_NTPase"/>
</dbReference>
<dbReference type="NCBIfam" id="TIGR01070">
    <property type="entry name" value="mutS1"/>
    <property type="match status" value="1"/>
</dbReference>
<dbReference type="NCBIfam" id="NF003810">
    <property type="entry name" value="PRK05399.1"/>
    <property type="match status" value="1"/>
</dbReference>
<dbReference type="PANTHER" id="PTHR11361:SF34">
    <property type="entry name" value="DNA MISMATCH REPAIR PROTEIN MSH1, MITOCHONDRIAL"/>
    <property type="match status" value="1"/>
</dbReference>
<dbReference type="PANTHER" id="PTHR11361">
    <property type="entry name" value="DNA MISMATCH REPAIR PROTEIN MUTS FAMILY MEMBER"/>
    <property type="match status" value="1"/>
</dbReference>
<dbReference type="Pfam" id="PF01624">
    <property type="entry name" value="MutS_I"/>
    <property type="match status" value="1"/>
</dbReference>
<dbReference type="Pfam" id="PF05188">
    <property type="entry name" value="MutS_II"/>
    <property type="match status" value="1"/>
</dbReference>
<dbReference type="Pfam" id="PF05192">
    <property type="entry name" value="MutS_III"/>
    <property type="match status" value="1"/>
</dbReference>
<dbReference type="Pfam" id="PF05190">
    <property type="entry name" value="MutS_IV"/>
    <property type="match status" value="1"/>
</dbReference>
<dbReference type="Pfam" id="PF00488">
    <property type="entry name" value="MutS_V"/>
    <property type="match status" value="1"/>
</dbReference>
<dbReference type="PIRSF" id="PIRSF037677">
    <property type="entry name" value="DNA_mis_repair_Msh6"/>
    <property type="match status" value="1"/>
</dbReference>
<dbReference type="SMART" id="SM00534">
    <property type="entry name" value="MUTSac"/>
    <property type="match status" value="1"/>
</dbReference>
<dbReference type="SMART" id="SM00533">
    <property type="entry name" value="MUTSd"/>
    <property type="match status" value="1"/>
</dbReference>
<dbReference type="SUPFAM" id="SSF55271">
    <property type="entry name" value="DNA repair protein MutS, domain I"/>
    <property type="match status" value="1"/>
</dbReference>
<dbReference type="SUPFAM" id="SSF53150">
    <property type="entry name" value="DNA repair protein MutS, domain II"/>
    <property type="match status" value="1"/>
</dbReference>
<dbReference type="SUPFAM" id="SSF48334">
    <property type="entry name" value="DNA repair protein MutS, domain III"/>
    <property type="match status" value="1"/>
</dbReference>
<dbReference type="SUPFAM" id="SSF52540">
    <property type="entry name" value="P-loop containing nucleoside triphosphate hydrolases"/>
    <property type="match status" value="1"/>
</dbReference>
<dbReference type="PROSITE" id="PS00486">
    <property type="entry name" value="DNA_MISMATCH_REPAIR_2"/>
    <property type="match status" value="1"/>
</dbReference>
<gene>
    <name type="primary">mutS</name>
    <name type="ordered locus">BB_0797</name>
</gene>
<sequence length="862" mass="99749">MEKNVTPMIRQYLDIKKKYKDAVLFFRVGSFYEMFFDDAIEVSKLLNLTLTKRENVPMCGVPYHTSKEYIRKLILFDKKVAICEQASNSTSGGPLEREVVEVITPGVIIDEDFLNDDINNYLVAISDYKDYYSFSYIDLSTSSLGIMFYENGFFEKLKRDLEKYSPKEIIVSENFYYEYSEKLNLSRFLINRVPTWHLDKDIAIKTIKEHFNILGLSSLGFDEEKPYYISIFLIINHIKNNLKNLLSNIDKIDINNDSSYMFLDDVTQVNLELVKNNNDFSSQYSLYSVLNDCKTAMGKRLLREFILNPILNISEINTRLDHVEFFCKNISLTVTLRETFINIWDIERIISRIQMKRYIKKDFLFIEKALSVFFTVKKLFDKHNFDYWNFDKFEEDSISKVYFLINSAISSAPDELIKRGYDLKLDNLKDLKINANKYIDQYLESERLLSKINNLKIRKTNNRGLFFEVTKSNYAQVPPHFMESQALNSSKRYKTEKLISLEVDINNAEDNVVAFEQEIFDEIASNVVMHNKVLKKVAEFFAYIDLVVNFGYLAKKNEYKRPVLTSGKEILLEKSRHPVVEHYTKNTEIFTENFVRINKEKYFCLITGPNMAGKSTYLRQVALITLMAHIGSFVPASKALIGITDKIFCRIGASDNIAKGESTFLVEMNETANILRNATEKSLIIMDEVGRGTSTNDGLAIAYSIIEYILEYIKARSLFATHFHELSSINHQAFINLSMKIEKQGNDLVFLREVEEKPSLNSYGIYVARIAGLPLRVIDRANVILESLVGREGNSCLEFLPHVSSDGNDKEILKNDTDIHIKLNEYLELKNFISNIDINNITPFQSIELLNQIVLKVISQSS</sequence>
<evidence type="ECO:0000250" key="1"/>
<evidence type="ECO:0000255" key="2"/>
<evidence type="ECO:0000305" key="3"/>
<name>MUTS_BORBU</name>
<feature type="chain" id="PRO_0000115073" description="DNA mismatch repair protein MutS">
    <location>
        <begin position="1"/>
        <end position="862"/>
    </location>
</feature>
<feature type="binding site" evidence="2">
    <location>
        <begin position="608"/>
        <end position="615"/>
    </location>
    <ligand>
        <name>ATP</name>
        <dbReference type="ChEBI" id="CHEBI:30616"/>
    </ligand>
</feature>
<keyword id="KW-0067">ATP-binding</keyword>
<keyword id="KW-0227">DNA damage</keyword>
<keyword id="KW-0234">DNA repair</keyword>
<keyword id="KW-0238">DNA-binding</keyword>
<keyword id="KW-0547">Nucleotide-binding</keyword>
<keyword id="KW-1185">Reference proteome</keyword>
<comment type="function">
    <text evidence="1">This protein is involved in the repair of mismatches in DNA. It is possible that it carries out the mismatch recognition step. This protein has a weak ATPase activity (By similarity).</text>
</comment>
<comment type="similarity">
    <text evidence="3">Belongs to the DNA mismatch repair MutS family.</text>
</comment>